<protein>
    <recommendedName>
        <fullName evidence="6">Small ribosomal subunit protein eS24B</fullName>
    </recommendedName>
    <alternativeName>
        <fullName evidence="7">40S ribosomal protein S24-B</fullName>
    </alternativeName>
    <alternativeName>
        <fullName>RP50</fullName>
    </alternativeName>
</protein>
<gene>
    <name evidence="7" type="primary">RPS24B</name>
    <name type="synonym">RPS24EB</name>
    <name type="ordered locus">YIL069C</name>
</gene>
<reference key="1">
    <citation type="journal article" date="1997" name="Nature">
        <title>The nucleotide sequence of Saccharomyces cerevisiae chromosome IX.</title>
        <authorList>
            <person name="Churcher C.M."/>
            <person name="Bowman S."/>
            <person name="Badcock K."/>
            <person name="Bankier A.T."/>
            <person name="Brown D."/>
            <person name="Chillingworth T."/>
            <person name="Connor R."/>
            <person name="Devlin K."/>
            <person name="Gentles S."/>
            <person name="Hamlin N."/>
            <person name="Harris D.E."/>
            <person name="Horsnell T."/>
            <person name="Hunt S."/>
            <person name="Jagels K."/>
            <person name="Jones M."/>
            <person name="Lye G."/>
            <person name="Moule S."/>
            <person name="Odell C."/>
            <person name="Pearson D."/>
            <person name="Rajandream M.A."/>
            <person name="Rice P."/>
            <person name="Rowley N."/>
            <person name="Skelton J."/>
            <person name="Smith V."/>
            <person name="Walsh S.V."/>
            <person name="Whitehead S."/>
            <person name="Barrell B.G."/>
        </authorList>
    </citation>
    <scope>NUCLEOTIDE SEQUENCE [LARGE SCALE GENOMIC DNA]</scope>
    <source>
        <strain>ATCC 204508 / S288c</strain>
    </source>
</reference>
<reference key="2">
    <citation type="journal article" date="2014" name="G3 (Bethesda)">
        <title>The reference genome sequence of Saccharomyces cerevisiae: Then and now.</title>
        <authorList>
            <person name="Engel S.R."/>
            <person name="Dietrich F.S."/>
            <person name="Fisk D.G."/>
            <person name="Binkley G."/>
            <person name="Balakrishnan R."/>
            <person name="Costanzo M.C."/>
            <person name="Dwight S.S."/>
            <person name="Hitz B.C."/>
            <person name="Karra K."/>
            <person name="Nash R.S."/>
            <person name="Weng S."/>
            <person name="Wong E.D."/>
            <person name="Lloyd P."/>
            <person name="Skrzypek M.S."/>
            <person name="Miyasato S.R."/>
            <person name="Simison M."/>
            <person name="Cherry J.M."/>
        </authorList>
    </citation>
    <scope>GENOME REANNOTATION</scope>
    <source>
        <strain>ATCC 204508 / S288c</strain>
    </source>
</reference>
<reference key="3">
    <citation type="journal article" date="1992" name="J. Biol. Chem.">
        <title>NH2-terminal acetylation of ribosomal proteins of Saccharomyces cerevisiae.</title>
        <authorList>
            <person name="Takakura H."/>
            <person name="Tsunasawa S."/>
            <person name="Miyagi M."/>
            <person name="Warner J.R."/>
        </authorList>
    </citation>
    <scope>PROTEIN SEQUENCE OF 2-16</scope>
    <scope>ACETYLATION AT SER-2 BY NATA</scope>
</reference>
<reference key="4">
    <citation type="journal article" date="1998" name="Yeast">
        <title>The list of cytoplasmic ribosomal proteins of Saccharomyces cerevisiae.</title>
        <authorList>
            <person name="Planta R.J."/>
            <person name="Mager W.H."/>
        </authorList>
    </citation>
    <scope>NOMENCLATURE</scope>
    <scope>SUBUNIT</scope>
</reference>
<reference key="5">
    <citation type="journal article" date="2003" name="Nature">
        <title>Global analysis of protein localization in budding yeast.</title>
        <authorList>
            <person name="Huh W.-K."/>
            <person name="Falvo J.V."/>
            <person name="Gerke L.C."/>
            <person name="Carroll A.S."/>
            <person name="Howson R.W."/>
            <person name="Weissman J.S."/>
            <person name="O'Shea E.K."/>
        </authorList>
    </citation>
    <scope>SUBCELLULAR LOCATION [LARGE SCALE ANALYSIS]</scope>
</reference>
<reference key="6">
    <citation type="journal article" date="2003" name="Nature">
        <title>Global analysis of protein expression in yeast.</title>
        <authorList>
            <person name="Ghaemmaghami S."/>
            <person name="Huh W.-K."/>
            <person name="Bower K."/>
            <person name="Howson R.W."/>
            <person name="Belle A."/>
            <person name="Dephoure N."/>
            <person name="O'Shea E.K."/>
            <person name="Weissman J.S."/>
        </authorList>
    </citation>
    <scope>LEVEL OF PROTEIN EXPRESSION [LARGE SCALE ANALYSIS]</scope>
</reference>
<reference key="7">
    <citation type="journal article" date="2008" name="Mol. Cell. Proteomics">
        <title>A multidimensional chromatography technology for in-depth phosphoproteome analysis.</title>
        <authorList>
            <person name="Albuquerque C.P."/>
            <person name="Smolka M.B."/>
            <person name="Payne S.H."/>
            <person name="Bafna V."/>
            <person name="Eng J."/>
            <person name="Zhou H."/>
        </authorList>
    </citation>
    <scope>PHOSPHORYLATION [LARGE SCALE ANALYSIS] AT SER-14</scope>
    <scope>IDENTIFICATION BY MASS SPECTROMETRY [LARGE SCALE ANALYSIS]</scope>
</reference>
<reference key="8">
    <citation type="journal article" date="2009" name="Science">
        <title>Global analysis of Cdk1 substrate phosphorylation sites provides insights into evolution.</title>
        <authorList>
            <person name="Holt L.J."/>
            <person name="Tuch B.B."/>
            <person name="Villen J."/>
            <person name="Johnson A.D."/>
            <person name="Gygi S.P."/>
            <person name="Morgan D.O."/>
        </authorList>
    </citation>
    <scope>PHOSPHORYLATION [LARGE SCALE ANALYSIS] AT SER-56</scope>
    <scope>IDENTIFICATION BY MASS SPECTROMETRY [LARGE SCALE ANALYSIS]</scope>
</reference>
<reference key="9">
    <citation type="journal article" date="2011" name="Science">
        <title>The structure of the eukaryotic ribosome at 3.0 A resolution.</title>
        <authorList>
            <person name="Ben-Shem A."/>
            <person name="Garreau de Loubresse N."/>
            <person name="Melnikov S."/>
            <person name="Jenner L."/>
            <person name="Yusupova G."/>
            <person name="Yusupov M."/>
        </authorList>
    </citation>
    <scope>SUBUNIT</scope>
    <scope>SUBCELLULAR LOCATION</scope>
</reference>
<reference key="10">
    <citation type="journal article" date="2012" name="Proc. Natl. Acad. Sci. U.S.A.">
        <title>N-terminal acetylome analyses and functional insights of the N-terminal acetyltransferase NatB.</title>
        <authorList>
            <person name="Van Damme P."/>
            <person name="Lasa M."/>
            <person name="Polevoda B."/>
            <person name="Gazquez C."/>
            <person name="Elosegui-Artola A."/>
            <person name="Kim D.S."/>
            <person name="De Juan-Pardo E."/>
            <person name="Demeyer K."/>
            <person name="Hole K."/>
            <person name="Larrea E."/>
            <person name="Timmerman E."/>
            <person name="Prieto J."/>
            <person name="Arnesen T."/>
            <person name="Sherman F."/>
            <person name="Gevaert K."/>
            <person name="Aldabe R."/>
        </authorList>
    </citation>
    <scope>ACETYLATION [LARGE SCALE ANALYSIS] AT SER-2</scope>
    <scope>CLEAVAGE OF INITIATOR METHIONINE [LARGE SCALE ANALYSIS]</scope>
    <scope>IDENTIFICATION BY MASS SPECTROMETRY [LARGE SCALE ANALYSIS]</scope>
</reference>
<reference key="11">
    <citation type="journal article" date="2012" name="Proteomics">
        <title>Sites of ubiquitin attachment in Saccharomyces cerevisiae.</title>
        <authorList>
            <person name="Starita L.M."/>
            <person name="Lo R.S."/>
            <person name="Eng J.K."/>
            <person name="von Haller P.D."/>
            <person name="Fields S."/>
        </authorList>
    </citation>
    <scope>UBIQUITINATION [LARGE SCALE ANALYSIS] AT LYS-21</scope>
    <scope>IDENTIFICATION BY MASS SPECTROMETRY [LARGE SCALE ANALYSIS]</scope>
</reference>
<reference key="12">
    <citation type="journal article" date="2014" name="Curr. Opin. Struct. Biol.">
        <title>A new system for naming ribosomal proteins.</title>
        <authorList>
            <person name="Ban N."/>
            <person name="Beckmann R."/>
            <person name="Cate J.H.D."/>
            <person name="Dinman J.D."/>
            <person name="Dragon F."/>
            <person name="Ellis S.R."/>
            <person name="Lafontaine D.L.J."/>
            <person name="Lindahl L."/>
            <person name="Liljas A."/>
            <person name="Lipton J.M."/>
            <person name="McAlear M.A."/>
            <person name="Moore P.B."/>
            <person name="Noller H.F."/>
            <person name="Ortega J."/>
            <person name="Panse V.G."/>
            <person name="Ramakrishnan V."/>
            <person name="Spahn C.M.T."/>
            <person name="Steitz T.A."/>
            <person name="Tchorzewski M."/>
            <person name="Tollervey D."/>
            <person name="Warren A.J."/>
            <person name="Williamson J.R."/>
            <person name="Wilson D."/>
            <person name="Yonath A."/>
            <person name="Yusupov M."/>
        </authorList>
    </citation>
    <scope>NOMENCLATURE</scope>
</reference>
<proteinExistence type="evidence at protein level"/>
<name>RS24B_YEAST</name>
<evidence type="ECO:0000256" key="1">
    <source>
        <dbReference type="SAM" id="MobiDB-lite"/>
    </source>
</evidence>
<evidence type="ECO:0000269" key="2">
    <source>
    </source>
</evidence>
<evidence type="ECO:0000269" key="3">
    <source>
    </source>
</evidence>
<evidence type="ECO:0000269" key="4">
    <source>
    </source>
</evidence>
<evidence type="ECO:0000269" key="5">
    <source>
    </source>
</evidence>
<evidence type="ECO:0000303" key="6">
    <source>
    </source>
</evidence>
<evidence type="ECO:0000303" key="7">
    <source>
    </source>
</evidence>
<evidence type="ECO:0000305" key="8"/>
<evidence type="ECO:0000305" key="9">
    <source>
    </source>
</evidence>
<evidence type="ECO:0000305" key="10">
    <source>
    </source>
</evidence>
<evidence type="ECO:0007744" key="11">
    <source>
    </source>
</evidence>
<evidence type="ECO:0007744" key="12">
    <source>
    </source>
</evidence>
<evidence type="ECO:0007744" key="13">
    <source>
    </source>
</evidence>
<evidence type="ECO:0007744" key="14">
    <source>
    </source>
</evidence>
<comment type="function">
    <text evidence="9">Component of the ribosome, a large ribonucleoprotein complex responsible for the synthesis of proteins in the cell. The small ribosomal subunit (SSU) binds messenger RNAs (mRNAs) and translates the encoded message by selecting cognate aminoacyl-transfer RNA (tRNA) molecules. The large subunit (LSU) contains the ribosomal catalytic site termed the peptidyl transferase center (PTC), which catalyzes the formation of peptide bonds, thereby polymerizing the amino acids delivered by tRNAs into a polypeptide chain. The nascent polypeptides leave the ribosome through a tunnel in the LSU and interact with protein factors that function in enzymatic processing, targeting, and the membrane insertion of nascent chains at the exit of the ribosomal tunnel.</text>
</comment>
<comment type="subunit">
    <text evidence="5 10">Component of the small ribosomal subunit (SSU). Mature yeast ribosomes consist of a small (40S) and a large (60S) subunit. The 40S small subunit contains 1 molecule of ribosomal RNA (18S rRNA) and 33 different proteins (encoded by 57 genes). The large 60S subunit contains 3 rRNA molecules (25S, 5.8S and 5S rRNA) and 46 different proteins (encoded by 81 genes) (PubMed:22096102, PubMed:9559554).</text>
</comment>
<comment type="subcellular location">
    <subcellularLocation>
        <location evidence="2 5">Cytoplasm</location>
    </subcellularLocation>
</comment>
<comment type="PTM">
    <text evidence="4">N-terminally acetylated by acetyltransferase NatA. Also partially acetylated by NatC.</text>
</comment>
<comment type="miscellaneous">
    <text evidence="3">Present with 6160 molecules/cell in log phase SD medium.</text>
</comment>
<comment type="miscellaneous">
    <text evidence="8">There are 2 genes for eS24 in yeast.</text>
</comment>
<comment type="similarity">
    <text evidence="8">Belongs to the eukaryotic ribosomal protein eS24 family.</text>
</comment>
<organism>
    <name type="scientific">Saccharomyces cerevisiae (strain ATCC 204508 / S288c)</name>
    <name type="common">Baker's yeast</name>
    <dbReference type="NCBI Taxonomy" id="559292"/>
    <lineage>
        <taxon>Eukaryota</taxon>
        <taxon>Fungi</taxon>
        <taxon>Dikarya</taxon>
        <taxon>Ascomycota</taxon>
        <taxon>Saccharomycotina</taxon>
        <taxon>Saccharomycetes</taxon>
        <taxon>Saccharomycetales</taxon>
        <taxon>Saccharomycetaceae</taxon>
        <taxon>Saccharomyces</taxon>
    </lineage>
</organism>
<feature type="initiator methionine" description="Removed" evidence="4 14">
    <location>
        <position position="1"/>
    </location>
</feature>
<feature type="chain" id="PRO_0000409762" description="Small ribosomal subunit protein eS24B">
    <location>
        <begin position="2"/>
        <end position="135"/>
    </location>
</feature>
<feature type="region of interest" description="Disordered" evidence="1">
    <location>
        <begin position="102"/>
        <end position="135"/>
    </location>
</feature>
<feature type="compositionally biased region" description="Basic residues" evidence="1">
    <location>
        <begin position="105"/>
        <end position="115"/>
    </location>
</feature>
<feature type="compositionally biased region" description="Basic residues" evidence="1">
    <location>
        <begin position="124"/>
        <end position="135"/>
    </location>
</feature>
<feature type="modified residue" description="N-acetylserine" evidence="4 14">
    <location>
        <position position="2"/>
    </location>
</feature>
<feature type="modified residue" description="Phosphoserine" evidence="11">
    <location>
        <position position="14"/>
    </location>
</feature>
<feature type="modified residue" description="Phosphoserine" evidence="12">
    <location>
        <position position="56"/>
    </location>
</feature>
<feature type="cross-link" description="Glycyl lysine isopeptide (Lys-Gly) (interchain with G-Cter in ubiquitin)" evidence="13">
    <location>
        <position position="21"/>
    </location>
</feature>
<feature type="sequence conflict" description="In Ref. 3; AA sequence." evidence="8" ref="3">
    <original>P</original>
    <variation>D</variation>
    <location>
        <position position="16"/>
    </location>
</feature>
<accession>P0CX32</accession>
<accession>D3DLX9</accession>
<accession>P26782</accession>
<keyword id="KW-0007">Acetylation</keyword>
<keyword id="KW-0963">Cytoplasm</keyword>
<keyword id="KW-0903">Direct protein sequencing</keyword>
<keyword id="KW-1017">Isopeptide bond</keyword>
<keyword id="KW-0597">Phosphoprotein</keyword>
<keyword id="KW-1185">Reference proteome</keyword>
<keyword id="KW-0687">Ribonucleoprotein</keyword>
<keyword id="KW-0689">Ribosomal protein</keyword>
<keyword id="KW-0832">Ubl conjugation</keyword>
<sequence>MSDAVTIRTRKVISNPLLARKQFVVDVLHPNRANVSKDELREKLAEVYKAEKDAVSVFGFRTQFGGGKSVGFGLVYNSVAEAKKFEPTYRLVRYGLAEKVEKASRQQRKQKKNRDKKIFGTGKRLAKKVARRNAD</sequence>
<dbReference type="EMBL" id="Z38060">
    <property type="protein sequence ID" value="CAA86154.1"/>
    <property type="molecule type" value="Genomic_DNA"/>
</dbReference>
<dbReference type="EMBL" id="BK006942">
    <property type="protein sequence ID" value="DAA08481.1"/>
    <property type="molecule type" value="Genomic_DNA"/>
</dbReference>
<dbReference type="PIR" id="S48410">
    <property type="entry name" value="S48410"/>
</dbReference>
<dbReference type="RefSeq" id="NP_012195.1">
    <property type="nucleotide sequence ID" value="NM_001179419.1"/>
</dbReference>
<dbReference type="SMR" id="P0CX32"/>
<dbReference type="BioGRID" id="34923">
    <property type="interactions" value="162"/>
</dbReference>
<dbReference type="BioGRID" id="36817">
    <property type="interactions" value="438"/>
</dbReference>
<dbReference type="ComplexPortal" id="CPX-1599">
    <property type="entry name" value="40S cytosolic small ribosomal subunit"/>
</dbReference>
<dbReference type="FunCoup" id="P0CX32">
    <property type="interactions" value="1102"/>
</dbReference>
<dbReference type="IntAct" id="P0CX32">
    <property type="interactions" value="34"/>
</dbReference>
<dbReference type="MINT" id="P0CX32"/>
<dbReference type="iPTMnet" id="P0CX32"/>
<dbReference type="EnsemblFungi" id="YER074W_mRNA">
    <property type="protein sequence ID" value="YER074W"/>
    <property type="gene ID" value="YER074W"/>
</dbReference>
<dbReference type="EnsemblFungi" id="YIL069C_mRNA">
    <property type="protein sequence ID" value="YIL069C"/>
    <property type="gene ID" value="YIL069C"/>
</dbReference>
<dbReference type="GeneID" id="854741"/>
<dbReference type="KEGG" id="sce:YER074W"/>
<dbReference type="KEGG" id="sce:YIL069C"/>
<dbReference type="AGR" id="SGD:S000001331"/>
<dbReference type="SGD" id="S000001331">
    <property type="gene designation" value="RPS24B"/>
</dbReference>
<dbReference type="VEuPathDB" id="FungiDB:YER074W"/>
<dbReference type="VEuPathDB" id="FungiDB:YIL069C"/>
<dbReference type="GeneTree" id="ENSGT00390000000153"/>
<dbReference type="HOGENOM" id="CLU_107248_1_0_1"/>
<dbReference type="InParanoid" id="P0CX32"/>
<dbReference type="OMA" id="IRVKKYM"/>
<dbReference type="OrthoDB" id="5571754at2759"/>
<dbReference type="BioCyc" id="YEAST:G3O-31336-MONOMER"/>
<dbReference type="Reactome" id="R-SCE-156827">
    <property type="pathway name" value="L13a-mediated translational silencing of Ceruloplasmin expression"/>
</dbReference>
<dbReference type="Reactome" id="R-SCE-1799339">
    <property type="pathway name" value="SRP-dependent cotranslational protein targeting to membrane"/>
</dbReference>
<dbReference type="Reactome" id="R-SCE-72649">
    <property type="pathway name" value="Translation initiation complex formation"/>
</dbReference>
<dbReference type="Reactome" id="R-SCE-72689">
    <property type="pathway name" value="Formation of a pool of free 40S subunits"/>
</dbReference>
<dbReference type="Reactome" id="R-SCE-72695">
    <property type="pathway name" value="Formation of the ternary complex, and subsequently, the 43S complex"/>
</dbReference>
<dbReference type="Reactome" id="R-SCE-72702">
    <property type="pathway name" value="Ribosomal scanning and start codon recognition"/>
</dbReference>
<dbReference type="Reactome" id="R-SCE-72706">
    <property type="pathway name" value="GTP hydrolysis and joining of the 60S ribosomal subunit"/>
</dbReference>
<dbReference type="Reactome" id="R-SCE-975956">
    <property type="pathway name" value="Nonsense Mediated Decay (NMD) independent of the Exon Junction Complex (EJC)"/>
</dbReference>
<dbReference type="Reactome" id="R-SCE-975957">
    <property type="pathway name" value="Nonsense Mediated Decay (NMD) enhanced by the Exon Junction Complex (EJC)"/>
</dbReference>
<dbReference type="BioGRID-ORCS" id="854741">
    <property type="hits" value="1 hit in 10 CRISPR screens"/>
</dbReference>
<dbReference type="BioGRID-ORCS" id="856805">
    <property type="hits" value="3 hits in 10 CRISPR screens"/>
</dbReference>
<dbReference type="PRO" id="PR:P0CX32"/>
<dbReference type="Proteomes" id="UP000002311">
    <property type="component" value="Chromosome IX"/>
</dbReference>
<dbReference type="RNAct" id="P0CX32">
    <property type="molecule type" value="protein"/>
</dbReference>
<dbReference type="ExpressionAtlas" id="P0CX32">
    <property type="expression patterns" value="baseline and differential"/>
</dbReference>
<dbReference type="GO" id="GO:0005829">
    <property type="term" value="C:cytosol"/>
    <property type="evidence" value="ECO:0000304"/>
    <property type="project" value="Reactome"/>
</dbReference>
<dbReference type="GO" id="GO:0022627">
    <property type="term" value="C:cytosolic small ribosomal subunit"/>
    <property type="evidence" value="ECO:0000303"/>
    <property type="project" value="SGD"/>
</dbReference>
<dbReference type="GO" id="GO:0003735">
    <property type="term" value="F:structural constituent of ribosome"/>
    <property type="evidence" value="ECO:0000303"/>
    <property type="project" value="SGD"/>
</dbReference>
<dbReference type="GO" id="GO:0002181">
    <property type="term" value="P:cytoplasmic translation"/>
    <property type="evidence" value="ECO:0000303"/>
    <property type="project" value="SGD"/>
</dbReference>
<dbReference type="GO" id="GO:0000462">
    <property type="term" value="P:maturation of SSU-rRNA from tricistronic rRNA transcript (SSU-rRNA, 5.8S rRNA, LSU-rRNA)"/>
    <property type="evidence" value="ECO:0000316"/>
    <property type="project" value="SGD"/>
</dbReference>
<dbReference type="FunFam" id="3.30.70.3370:FF:000001">
    <property type="entry name" value="40S ribosomal protein S24"/>
    <property type="match status" value="1"/>
</dbReference>
<dbReference type="Gene3D" id="3.30.70.3370">
    <property type="match status" value="1"/>
</dbReference>
<dbReference type="HAMAP" id="MF_00545">
    <property type="entry name" value="Ribosomal_eS24"/>
    <property type="match status" value="1"/>
</dbReference>
<dbReference type="InterPro" id="IPR053709">
    <property type="entry name" value="eRP_eS24_sf"/>
</dbReference>
<dbReference type="InterPro" id="IPR001976">
    <property type="entry name" value="Ribosomal_eS24"/>
</dbReference>
<dbReference type="InterPro" id="IPR018098">
    <property type="entry name" value="Ribosomal_eS24_CS"/>
</dbReference>
<dbReference type="InterPro" id="IPR012678">
    <property type="entry name" value="Ribosomal_uL23/eL15/eS24_sf"/>
</dbReference>
<dbReference type="PANTHER" id="PTHR10496">
    <property type="entry name" value="40S RIBOSOMAL PROTEIN S24"/>
    <property type="match status" value="1"/>
</dbReference>
<dbReference type="Pfam" id="PF01282">
    <property type="entry name" value="Ribosomal_S24e"/>
    <property type="match status" value="1"/>
</dbReference>
<dbReference type="SUPFAM" id="SSF54189">
    <property type="entry name" value="Ribosomal proteins S24e, L23 and L15e"/>
    <property type="match status" value="1"/>
</dbReference>
<dbReference type="PROSITE" id="PS00529">
    <property type="entry name" value="RIBOSOMAL_S24E"/>
    <property type="match status" value="1"/>
</dbReference>